<keyword id="KW-1185">Reference proteome</keyword>
<keyword id="KW-0687">Ribonucleoprotein</keyword>
<keyword id="KW-0689">Ribosomal protein</keyword>
<keyword id="KW-0694">RNA-binding</keyword>
<keyword id="KW-0699">rRNA-binding</keyword>
<evidence type="ECO:0000255" key="1">
    <source>
        <dbReference type="HAMAP-Rule" id="MF_00537"/>
    </source>
</evidence>
<evidence type="ECO:0000305" key="2"/>
<protein>
    <recommendedName>
        <fullName evidence="1">Small ribosomal subunit protein uS14</fullName>
    </recommendedName>
    <alternativeName>
        <fullName evidence="2">30S ribosomal protein S14</fullName>
    </alternativeName>
</protein>
<gene>
    <name evidence="1" type="primary">rpsN</name>
    <name type="ordered locus">PA0574</name>
</gene>
<accession>B1VAD5</accession>
<comment type="function">
    <text evidence="1">Binds 16S rRNA, required for the assembly of 30S particles and may also be responsible for determining the conformation of the 16S rRNA at the A site.</text>
</comment>
<comment type="subunit">
    <text evidence="1">Part of the 30S ribosomal subunit. Contacts proteins S3 and S10.</text>
</comment>
<comment type="similarity">
    <text evidence="1">Belongs to the universal ribosomal protein uS14 family.</text>
</comment>
<name>RS14_PHYAS</name>
<dbReference type="EMBL" id="AM422018">
    <property type="protein sequence ID" value="CAM11908.1"/>
    <property type="molecule type" value="Genomic_DNA"/>
</dbReference>
<dbReference type="SMR" id="B1VAD5"/>
<dbReference type="STRING" id="59748.PA0574"/>
<dbReference type="KEGG" id="pal:PA0574"/>
<dbReference type="eggNOG" id="COG0199">
    <property type="taxonomic scope" value="Bacteria"/>
</dbReference>
<dbReference type="Proteomes" id="UP000008323">
    <property type="component" value="Chromosome"/>
</dbReference>
<dbReference type="GO" id="GO:0005737">
    <property type="term" value="C:cytoplasm"/>
    <property type="evidence" value="ECO:0007669"/>
    <property type="project" value="UniProtKB-ARBA"/>
</dbReference>
<dbReference type="GO" id="GO:0015935">
    <property type="term" value="C:small ribosomal subunit"/>
    <property type="evidence" value="ECO:0007669"/>
    <property type="project" value="TreeGrafter"/>
</dbReference>
<dbReference type="GO" id="GO:0019843">
    <property type="term" value="F:rRNA binding"/>
    <property type="evidence" value="ECO:0007669"/>
    <property type="project" value="UniProtKB-UniRule"/>
</dbReference>
<dbReference type="GO" id="GO:0003735">
    <property type="term" value="F:structural constituent of ribosome"/>
    <property type="evidence" value="ECO:0007669"/>
    <property type="project" value="InterPro"/>
</dbReference>
<dbReference type="GO" id="GO:0006412">
    <property type="term" value="P:translation"/>
    <property type="evidence" value="ECO:0007669"/>
    <property type="project" value="UniProtKB-UniRule"/>
</dbReference>
<dbReference type="Gene3D" id="4.10.830.10">
    <property type="entry name" value="30s Ribosomal Protein S14, Chain N"/>
    <property type="match status" value="1"/>
</dbReference>
<dbReference type="HAMAP" id="MF_00537">
    <property type="entry name" value="Ribosomal_uS14_1"/>
    <property type="match status" value="1"/>
</dbReference>
<dbReference type="InterPro" id="IPR001209">
    <property type="entry name" value="Ribosomal_uS14"/>
</dbReference>
<dbReference type="InterPro" id="IPR023036">
    <property type="entry name" value="Ribosomal_uS14_bac/plastid"/>
</dbReference>
<dbReference type="InterPro" id="IPR043140">
    <property type="entry name" value="Ribosomal_uS14_sf"/>
</dbReference>
<dbReference type="NCBIfam" id="NF006477">
    <property type="entry name" value="PRK08881.1"/>
    <property type="match status" value="1"/>
</dbReference>
<dbReference type="PANTHER" id="PTHR19836">
    <property type="entry name" value="30S RIBOSOMAL PROTEIN S14"/>
    <property type="match status" value="1"/>
</dbReference>
<dbReference type="PANTHER" id="PTHR19836:SF19">
    <property type="entry name" value="SMALL RIBOSOMAL SUBUNIT PROTEIN US14M"/>
    <property type="match status" value="1"/>
</dbReference>
<dbReference type="Pfam" id="PF00253">
    <property type="entry name" value="Ribosomal_S14"/>
    <property type="match status" value="1"/>
</dbReference>
<dbReference type="SUPFAM" id="SSF57716">
    <property type="entry name" value="Glucocorticoid receptor-like (DNA-binding domain)"/>
    <property type="match status" value="1"/>
</dbReference>
<sequence>MAKKSKIAKDRKQRVLVLKYASLRSELKKKADYVGLSQIPAKASPVRLKNRDSIDGRPRGYIRKFGISRIKFRQLAHEGKLPGVKKTSW</sequence>
<feature type="chain" id="PRO_1000128488" description="Small ribosomal subunit protein uS14">
    <location>
        <begin position="1"/>
        <end position="89"/>
    </location>
</feature>
<proteinExistence type="inferred from homology"/>
<organism>
    <name type="scientific">Phytoplasma australiense</name>
    <dbReference type="NCBI Taxonomy" id="59748"/>
    <lineage>
        <taxon>Bacteria</taxon>
        <taxon>Bacillati</taxon>
        <taxon>Mycoplasmatota</taxon>
        <taxon>Mollicutes</taxon>
        <taxon>Acholeplasmatales</taxon>
        <taxon>Acholeplasmataceae</taxon>
        <taxon>Candidatus Phytoplasma</taxon>
        <taxon>16SrXII (Stolbur group)</taxon>
    </lineage>
</organism>
<reference key="1">
    <citation type="journal article" date="2008" name="J. Bacteriol.">
        <title>Comparative genome analysis of 'Candidatus Phytoplasma australiense' (subgroup tuf-Australia I; rp-A) and 'Ca. Phytoplasma asteris' strains OY-M and AY-WB.</title>
        <authorList>
            <person name="Tran-Nguyen L.T."/>
            <person name="Kube M."/>
            <person name="Schneider B."/>
            <person name="Reinhardt R."/>
            <person name="Gibb K.S."/>
        </authorList>
    </citation>
    <scope>NUCLEOTIDE SEQUENCE [LARGE SCALE GENOMIC DNA]</scope>
</reference>